<organism>
    <name type="scientific">Mus musculus</name>
    <name type="common">Mouse</name>
    <dbReference type="NCBI Taxonomy" id="10090"/>
    <lineage>
        <taxon>Eukaryota</taxon>
        <taxon>Metazoa</taxon>
        <taxon>Chordata</taxon>
        <taxon>Craniata</taxon>
        <taxon>Vertebrata</taxon>
        <taxon>Euteleostomi</taxon>
        <taxon>Mammalia</taxon>
        <taxon>Eutheria</taxon>
        <taxon>Euarchontoglires</taxon>
        <taxon>Glires</taxon>
        <taxon>Rodentia</taxon>
        <taxon>Myomorpha</taxon>
        <taxon>Muroidea</taxon>
        <taxon>Muridae</taxon>
        <taxon>Murinae</taxon>
        <taxon>Mus</taxon>
        <taxon>Mus</taxon>
    </lineage>
</organism>
<gene>
    <name type="primary">Mical3</name>
    <name type="synonym">Kiaa0819</name>
    <name type="synonym">Kiaa1364</name>
</gene>
<protein>
    <recommendedName>
        <fullName>[F-actin]-monooxygenase MICAL3</fullName>
        <ecNumber evidence="2">1.14.13.225</ecNumber>
    </recommendedName>
    <alternativeName>
        <fullName>Molecule interacting with CasL protein 3</fullName>
        <shortName>MICAL-3</shortName>
    </alternativeName>
</protein>
<name>MICA3_MOUSE</name>
<comment type="function">
    <text evidence="2">Monooxygenase that promotes depolymerization of F-actin by mediating oxidation of specific methionine residues on actin to form methionine-sulfoxide, resulting in actin filament disassembly and preventing repolymerization. In the absence of actin, it also functions as a NADPH oxidase producing H(2)O(2). Seems to act as Rab effector protein and play a role in vesicle trafficking. Involved in exocytic vesicles tethering and fusion: the monooxygenase activity is required for this process and implicates RAB8A associated with exocytotic vesicles. Required for cytokinesis. Contributes to stabilization and/or maturation of the intercellular bridge independently of its monooxygenase activity. Promotes recruitment of Rab8 and ERC1 to the intercellular bridge, and together these proteins are proposed to function in timely abscission.</text>
</comment>
<comment type="catalytic activity">
    <reaction evidence="2">
        <text>L-methionyl-[F-actin] + NADPH + O2 + H(+) = L-methionyl-(R)-S-oxide-[F-actin] + NADP(+) + H2O</text>
        <dbReference type="Rhea" id="RHEA:51308"/>
        <dbReference type="Rhea" id="RHEA-COMP:12953"/>
        <dbReference type="Rhea" id="RHEA-COMP:12956"/>
        <dbReference type="ChEBI" id="CHEBI:15377"/>
        <dbReference type="ChEBI" id="CHEBI:15378"/>
        <dbReference type="ChEBI" id="CHEBI:15379"/>
        <dbReference type="ChEBI" id="CHEBI:16044"/>
        <dbReference type="ChEBI" id="CHEBI:45764"/>
        <dbReference type="ChEBI" id="CHEBI:57783"/>
        <dbReference type="ChEBI" id="CHEBI:58349"/>
        <dbReference type="EC" id="1.14.13.225"/>
    </reaction>
</comment>
<comment type="cofactor">
    <cofactor evidence="1">
        <name>FAD</name>
        <dbReference type="ChEBI" id="CHEBI:57692"/>
    </cofactor>
</comment>
<comment type="subunit">
    <text evidence="2">Interacts with RAB1B, RAB8A, RAB10, RAB13 and RAB15 (in their GTP-bound forms); binding to RAB1B is of low affinity compared to other Rab proteins; at least in case of RAB8A can bind 2 molecules of RAB8A simultaneously through a high and a low affinity binding site, respectively. Interacts with ERC1 and RAB8A; may bridge ERC1 with RAB8A. Interacts with KIF23 and ERC1; enhances the interaction between KIF23 and ERC1. Interacts with NINL.</text>
</comment>
<comment type="subcellular location">
    <subcellularLocation>
        <location evidence="2">Cytoplasm</location>
    </subcellularLocation>
    <subcellularLocation>
        <location evidence="2">Cytoplasm</location>
        <location evidence="2">Cell cortex</location>
    </subcellularLocation>
    <subcellularLocation>
        <location evidence="2">Cytoplasm</location>
        <location evidence="2">Cytoskeleton</location>
    </subcellularLocation>
    <subcellularLocation>
        <location evidence="2">Nucleus</location>
    </subcellularLocation>
    <subcellularLocation>
        <location evidence="2">Midbody</location>
    </subcellularLocation>
    <subcellularLocation>
        <location evidence="2">Cytoplasm</location>
        <location evidence="2">Cytoskeleton</location>
        <location evidence="2">Spindle</location>
    </subcellularLocation>
    <subcellularLocation>
        <location evidence="2">Cytoplasm</location>
        <location evidence="2">Cytoskeleton</location>
        <location evidence="2">Cilium basal body</location>
    </subcellularLocation>
    <text evidence="2">Mainly localizes in the nucleus.</text>
</comment>
<comment type="alternative products">
    <event type="alternative splicing"/>
    <isoform>
        <id>Q8CJ19-1</id>
        <name>1</name>
        <sequence type="displayed"/>
    </isoform>
    <isoform>
        <id>Q8CJ19-2</id>
        <name>2</name>
        <sequence type="described" ref="VSP_039491 VSP_039492"/>
    </isoform>
    <isoform>
        <id>Q8CJ19-3</id>
        <name>3</name>
        <sequence type="described" ref="VSP_039493 VSP_039494"/>
    </isoform>
    <isoform>
        <id>Q8CJ19-4</id>
        <name>4</name>
        <sequence type="described" ref="VSP_039490 VSP_039495"/>
    </isoform>
</comment>
<comment type="domain">
    <text evidence="2">The bivalent Mical/EHBP Rab binding (bMERB) domain, mediates binding to predominantly Rab8, Rab10, Rab10, Rab13 and Rab15 (in their GTP-bound forms).</text>
</comment>
<comment type="similarity">
    <text evidence="14">Belongs to the Mical family.</text>
</comment>
<comment type="sequence caution" evidence="14">
    <conflict type="erroneous initiation">
        <sequence resource="EMBL-CDS" id="BAC65779"/>
    </conflict>
    <text>Extended N-terminus.</text>
</comment>
<accession>Q8CJ19</accession>
<accession>B2RR77</accession>
<accession>Q3UGQ8</accession>
<accession>Q3V160</accession>
<accession>Q69ZY5</accession>
<accession>Q80TE8</accession>
<accession>Q8BXB1</accession>
<evidence type="ECO:0000250" key="1"/>
<evidence type="ECO:0000250" key="2">
    <source>
        <dbReference type="UniProtKB" id="Q7RTP6"/>
    </source>
</evidence>
<evidence type="ECO:0000250" key="3">
    <source>
        <dbReference type="UniProtKB" id="Q8TDZ2"/>
    </source>
</evidence>
<evidence type="ECO:0000250" key="4">
    <source>
        <dbReference type="UniProtKB" id="Q8VDP3"/>
    </source>
</evidence>
<evidence type="ECO:0000255" key="5"/>
<evidence type="ECO:0000255" key="6">
    <source>
        <dbReference type="PROSITE-ProRule" id="PRU00044"/>
    </source>
</evidence>
<evidence type="ECO:0000255" key="7">
    <source>
        <dbReference type="PROSITE-ProRule" id="PRU00125"/>
    </source>
</evidence>
<evidence type="ECO:0000255" key="8">
    <source>
        <dbReference type="PROSITE-ProRule" id="PRU01195"/>
    </source>
</evidence>
<evidence type="ECO:0000256" key="9">
    <source>
        <dbReference type="SAM" id="MobiDB-lite"/>
    </source>
</evidence>
<evidence type="ECO:0000303" key="10">
    <source>
    </source>
</evidence>
<evidence type="ECO:0000303" key="11">
    <source>
    </source>
</evidence>
<evidence type="ECO:0000303" key="12">
    <source>
    </source>
</evidence>
<evidence type="ECO:0000303" key="13">
    <source ref="1"/>
</evidence>
<evidence type="ECO:0000305" key="14"/>
<evidence type="ECO:0007744" key="15">
    <source>
    </source>
</evidence>
<sequence length="1993" mass="223721">MEERKQETTNQAHVLFDRFVQATTCKGTLRAFQELCDHLELKPKDYRSFYHKLKSKLNYWKAKALWAKLDKRGSHKDYKKGKACTNTKCLIIGAGPCGLRTAIDLSLLGAKVVVIEKRDAFSRNNVLHLWPFTIHDLRGLGAKKFYGKFCAGAIDHISIRQLQLILLKVALILGIEIHVNVEFQGLVQPPEDQENERIGWRALVHPKTHPVSEYEFEVIIGGDGRRNTLEGFRRKEFRGKLAIAITANFINRNTTAEAKVEEISGVAFIFNQKFFQELREATGIDLENIVYYKDDTHYFVMTAKKQSLLDKGVILHDYTDTELLLSRENVDQEALLNYAREAADFSTQQQLPSLDFAINHYGQPDVAMFDFTCMYASENAALVREQNGHQLLVALVGDSLLEPFWPMGTGIARGFLAAMDSAWMVRSWSLGTSPLEVLAERESIYRLLPQTTPENVSKNFSQYSIDPVTRYPNININFLRPSQVRHLYDSGETKDIHLEMENMVNPRTTPKLTRNESVARSSKLLGWCQRQTEGYSGVNVTDLTMSWKSGLALCAIIHRYRPDLIDFDSLDEQNVEKNNQLAFDIAEKELGISPIMTGKEMASVGEPDKLSMVMYLTQFYEMFKDSLSSSDTLDLNAEEKAVLIASTKSPISFLSKLGQTISRKRSPKDKKEKDSDGAGKRRKTSQSEEEEPPRSYKGERPTLVSTLTDRRMDAAVGNQNKVKYMATQLLAKFEENAPAQSTGVRRQGSIKKEFPQNLGGSDTCYFCQKRVYVMERLSAEGKFFHRSCFKCEYCATTLRLSAYAYDIEDGKFYCKPHYCYRLSGYAQRKRPAVAPLSGKEVKGALQDGPTADANGLASVAASSAERSPGTSMNGLEEPSIAKRLRGTPERIELENYRRSVRQVEELEEVPEETQAEHNLSSVLDKGTEEDVASSSSESEMEEEEEEDDEDDHLPTSDLGGVPWKEAVRIHALLKGRSEEELEASKNFEPEEEEEEEEYEEEDEEYEEEEEEESSEAGNKRLQQIITAADPLAIQADVHWTHIREREAEERMLPTSESSTSRAPLDEDDLEEDADSEPAETEGEAAEDGDPGDTGAELDDQHWSDDIPSDAEAEHRLQSQAKVKAELELRVSENEEEKPSDAPKQEERGTSQVSSPSQPPEKQVGVFSPARSPGTEEAKSPLATKVKSPEEPLFPTPLLLREKPKAEVPEEQKAVLSPIRSQPVALPEARSPTSPTSLQPESLLAPPTPPTPPPTQLPICSQPQPSSDASIPSPTKSPIRFQPVPAKTSTPLTPLPVKSQGDPKDRLSGPLAVEEVLKRSDLVEEFWMKSAEIRRSLGLTPVDRSKGSEPSLPSPASKPISLKSYSVDKSPQDEGLCLLKPPSVPKRLGLPKSAGDQPPLLTPKSPSDKELRSSQEERRDLSSSSGLGLHDSSSNMKTLGSQSFNTSDSTMLTPPSSPPPPPPPNEEPATLRRKPHQTFERREASIIPPPTPASFMRPPREPAQPPREEVRKSFVESVDEIPFADDVEDTYDDKTEDSSLQEKFFTPPSCWSRSEKLQAKENGRLPPLEQDVPPQKRGLPLVSAEAKELAEERMRAREKSVKSQALRDAMAKQLSRMQAMEMVSSRSHTAQSQGKELGSESTRHPSLRGTQEPTLKHEATSEEILSPPSDSGGPDGSVTSSEGSSGKSKKRSSLFSPRRNKKEKKTKGEARPPEKPSPGLPEDVVAKPKSLWKSVFSGYKKDKKKKSDEKSCSSTPSSGATVDSGQRRASPMVRAELQLRRQLSFSEDSDLSSDDILERSSQKSKREPRTYTEEELSAKLTRRVQKAARRQAKQEELKRLHRAQIIQRQLEQVEEKQRQLEERGVAVEKALRGEAGMGKKDDPKLMQEWFKLVQEKNAMVRYESELMIFARELELEDRQSRLQQELRERMAVEDHLKTEGELSEEKKILNEMLEVVEQRDSLVALLEEQRLREKEEDKDLEAAMLCKGFSLDWS</sequence>
<reference key="1">
    <citation type="submission" date="2002-08" db="EMBL/GenBank/DDBJ databases">
        <title>Flavoprotein oxidoreductase MICAL-3 is associated with spermatid development.</title>
        <authorList>
            <person name="Korenbaum E."/>
            <person name="Hust H."/>
            <person name="Munck M."/>
            <person name="Noegel A.A."/>
        </authorList>
    </citation>
    <scope>NUCLEOTIDE SEQUENCE [MRNA] (ISOFORM 3)</scope>
    <source>
        <tissue>Testis</tissue>
    </source>
</reference>
<reference key="2">
    <citation type="journal article" date="2003" name="DNA Res.">
        <title>Prediction of the coding sequences of mouse homologues of KIAA gene: II. The complete nucleotide sequences of 400 mouse KIAA-homologous cDNAs identified by screening of terminal sequences of cDNA clones randomly sampled from size-fractionated libraries.</title>
        <authorList>
            <person name="Okazaki N."/>
            <person name="Kikuno R."/>
            <person name="Ohara R."/>
            <person name="Inamoto S."/>
            <person name="Aizawa H."/>
            <person name="Yuasa S."/>
            <person name="Nakajima D."/>
            <person name="Nagase T."/>
            <person name="Ohara O."/>
            <person name="Koga H."/>
        </authorList>
    </citation>
    <scope>NUCLEOTIDE SEQUENCE [LARGE SCALE MRNA] (ISOFORM 2)</scope>
    <scope>NUCLEOTIDE SEQUENCE [LARGE SCALE MRNA] OF 1526-1993 (ISOFORM 1)</scope>
    <source>
        <tissue>Brain</tissue>
    </source>
</reference>
<reference key="3">
    <citation type="journal article" date="2009" name="PLoS Biol.">
        <title>Lineage-specific biology revealed by a finished genome assembly of the mouse.</title>
        <authorList>
            <person name="Church D.M."/>
            <person name="Goodstadt L."/>
            <person name="Hillier L.W."/>
            <person name="Zody M.C."/>
            <person name="Goldstein S."/>
            <person name="She X."/>
            <person name="Bult C.J."/>
            <person name="Agarwala R."/>
            <person name="Cherry J.L."/>
            <person name="DiCuccio M."/>
            <person name="Hlavina W."/>
            <person name="Kapustin Y."/>
            <person name="Meric P."/>
            <person name="Maglott D."/>
            <person name="Birtle Z."/>
            <person name="Marques A.C."/>
            <person name="Graves T."/>
            <person name="Zhou S."/>
            <person name="Teague B."/>
            <person name="Potamousis K."/>
            <person name="Churas C."/>
            <person name="Place M."/>
            <person name="Herschleb J."/>
            <person name="Runnheim R."/>
            <person name="Forrest D."/>
            <person name="Amos-Landgraf J."/>
            <person name="Schwartz D.C."/>
            <person name="Cheng Z."/>
            <person name="Lindblad-Toh K."/>
            <person name="Eichler E.E."/>
            <person name="Ponting C.P."/>
        </authorList>
    </citation>
    <scope>NUCLEOTIDE SEQUENCE [LARGE SCALE GENOMIC DNA]</scope>
    <source>
        <strain>C57BL/6J</strain>
    </source>
</reference>
<reference key="4">
    <citation type="journal article" date="2004" name="Genome Res.">
        <title>The status, quality, and expansion of the NIH full-length cDNA project: the Mammalian Gene Collection (MGC).</title>
        <authorList>
            <consortium name="The MGC Project Team"/>
        </authorList>
    </citation>
    <scope>NUCLEOTIDE SEQUENCE [LARGE SCALE MRNA] (ISOFORM 3)</scope>
    <source>
        <tissue>Brain</tissue>
    </source>
</reference>
<reference key="5">
    <citation type="journal article" date="2005" name="Science">
        <title>The transcriptional landscape of the mammalian genome.</title>
        <authorList>
            <person name="Carninci P."/>
            <person name="Kasukawa T."/>
            <person name="Katayama S."/>
            <person name="Gough J."/>
            <person name="Frith M.C."/>
            <person name="Maeda N."/>
            <person name="Oyama R."/>
            <person name="Ravasi T."/>
            <person name="Lenhard B."/>
            <person name="Wells C."/>
            <person name="Kodzius R."/>
            <person name="Shimokawa K."/>
            <person name="Bajic V.B."/>
            <person name="Brenner S.E."/>
            <person name="Batalov S."/>
            <person name="Forrest A.R."/>
            <person name="Zavolan M."/>
            <person name="Davis M.J."/>
            <person name="Wilming L.G."/>
            <person name="Aidinis V."/>
            <person name="Allen J.E."/>
            <person name="Ambesi-Impiombato A."/>
            <person name="Apweiler R."/>
            <person name="Aturaliya R.N."/>
            <person name="Bailey T.L."/>
            <person name="Bansal M."/>
            <person name="Baxter L."/>
            <person name="Beisel K.W."/>
            <person name="Bersano T."/>
            <person name="Bono H."/>
            <person name="Chalk A.M."/>
            <person name="Chiu K.P."/>
            <person name="Choudhary V."/>
            <person name="Christoffels A."/>
            <person name="Clutterbuck D.R."/>
            <person name="Crowe M.L."/>
            <person name="Dalla E."/>
            <person name="Dalrymple B.P."/>
            <person name="de Bono B."/>
            <person name="Della Gatta G."/>
            <person name="di Bernardo D."/>
            <person name="Down T."/>
            <person name="Engstrom P."/>
            <person name="Fagiolini M."/>
            <person name="Faulkner G."/>
            <person name="Fletcher C.F."/>
            <person name="Fukushima T."/>
            <person name="Furuno M."/>
            <person name="Futaki S."/>
            <person name="Gariboldi M."/>
            <person name="Georgii-Hemming P."/>
            <person name="Gingeras T.R."/>
            <person name="Gojobori T."/>
            <person name="Green R.E."/>
            <person name="Gustincich S."/>
            <person name="Harbers M."/>
            <person name="Hayashi Y."/>
            <person name="Hensch T.K."/>
            <person name="Hirokawa N."/>
            <person name="Hill D."/>
            <person name="Huminiecki L."/>
            <person name="Iacono M."/>
            <person name="Ikeo K."/>
            <person name="Iwama A."/>
            <person name="Ishikawa T."/>
            <person name="Jakt M."/>
            <person name="Kanapin A."/>
            <person name="Katoh M."/>
            <person name="Kawasawa Y."/>
            <person name="Kelso J."/>
            <person name="Kitamura H."/>
            <person name="Kitano H."/>
            <person name="Kollias G."/>
            <person name="Krishnan S.P."/>
            <person name="Kruger A."/>
            <person name="Kummerfeld S.K."/>
            <person name="Kurochkin I.V."/>
            <person name="Lareau L.F."/>
            <person name="Lazarevic D."/>
            <person name="Lipovich L."/>
            <person name="Liu J."/>
            <person name="Liuni S."/>
            <person name="McWilliam S."/>
            <person name="Madan Babu M."/>
            <person name="Madera M."/>
            <person name="Marchionni L."/>
            <person name="Matsuda H."/>
            <person name="Matsuzawa S."/>
            <person name="Miki H."/>
            <person name="Mignone F."/>
            <person name="Miyake S."/>
            <person name="Morris K."/>
            <person name="Mottagui-Tabar S."/>
            <person name="Mulder N."/>
            <person name="Nakano N."/>
            <person name="Nakauchi H."/>
            <person name="Ng P."/>
            <person name="Nilsson R."/>
            <person name="Nishiguchi S."/>
            <person name="Nishikawa S."/>
            <person name="Nori F."/>
            <person name="Ohara O."/>
            <person name="Okazaki Y."/>
            <person name="Orlando V."/>
            <person name="Pang K.C."/>
            <person name="Pavan W.J."/>
            <person name="Pavesi G."/>
            <person name="Pesole G."/>
            <person name="Petrovsky N."/>
            <person name="Piazza S."/>
            <person name="Reed J."/>
            <person name="Reid J.F."/>
            <person name="Ring B.Z."/>
            <person name="Ringwald M."/>
            <person name="Rost B."/>
            <person name="Ruan Y."/>
            <person name="Salzberg S.L."/>
            <person name="Sandelin A."/>
            <person name="Schneider C."/>
            <person name="Schoenbach C."/>
            <person name="Sekiguchi K."/>
            <person name="Semple C.A."/>
            <person name="Seno S."/>
            <person name="Sessa L."/>
            <person name="Sheng Y."/>
            <person name="Shibata Y."/>
            <person name="Shimada H."/>
            <person name="Shimada K."/>
            <person name="Silva D."/>
            <person name="Sinclair B."/>
            <person name="Sperling S."/>
            <person name="Stupka E."/>
            <person name="Sugiura K."/>
            <person name="Sultana R."/>
            <person name="Takenaka Y."/>
            <person name="Taki K."/>
            <person name="Tammoja K."/>
            <person name="Tan S.L."/>
            <person name="Tang S."/>
            <person name="Taylor M.S."/>
            <person name="Tegner J."/>
            <person name="Teichmann S.A."/>
            <person name="Ueda H.R."/>
            <person name="van Nimwegen E."/>
            <person name="Verardo R."/>
            <person name="Wei C.L."/>
            <person name="Yagi K."/>
            <person name="Yamanishi H."/>
            <person name="Zabarovsky E."/>
            <person name="Zhu S."/>
            <person name="Zimmer A."/>
            <person name="Hide W."/>
            <person name="Bult C."/>
            <person name="Grimmond S.M."/>
            <person name="Teasdale R.D."/>
            <person name="Liu E.T."/>
            <person name="Brusic V."/>
            <person name="Quackenbush J."/>
            <person name="Wahlestedt C."/>
            <person name="Mattick J.S."/>
            <person name="Hume D.A."/>
            <person name="Kai C."/>
            <person name="Sasaki D."/>
            <person name="Tomaru Y."/>
            <person name="Fukuda S."/>
            <person name="Kanamori-Katayama M."/>
            <person name="Suzuki M."/>
            <person name="Aoki J."/>
            <person name="Arakawa T."/>
            <person name="Iida J."/>
            <person name="Imamura K."/>
            <person name="Itoh M."/>
            <person name="Kato T."/>
            <person name="Kawaji H."/>
            <person name="Kawagashira N."/>
            <person name="Kawashima T."/>
            <person name="Kojima M."/>
            <person name="Kondo S."/>
            <person name="Konno H."/>
            <person name="Nakano K."/>
            <person name="Ninomiya N."/>
            <person name="Nishio T."/>
            <person name="Okada M."/>
            <person name="Plessy C."/>
            <person name="Shibata K."/>
            <person name="Shiraki T."/>
            <person name="Suzuki S."/>
            <person name="Tagami M."/>
            <person name="Waki K."/>
            <person name="Watahiki A."/>
            <person name="Okamura-Oho Y."/>
            <person name="Suzuki H."/>
            <person name="Kawai J."/>
            <person name="Hayashizaki Y."/>
        </authorList>
    </citation>
    <scope>NUCLEOTIDE SEQUENCE [LARGE SCALE MRNA] OF 1-695 (ISOFORMS 1/2)</scope>
    <scope>NUCLEOTIDE SEQUENCE [LARGE SCALE MRNA] OF 1-1740 (ISOFORM 4)</scope>
    <source>
        <strain>C57BL/6J</strain>
        <tissue>Head</tissue>
        <tissue>Testis</tissue>
    </source>
</reference>
<reference key="6">
    <citation type="journal article" date="2010" name="Cell">
        <title>A tissue-specific atlas of mouse protein phosphorylation and expression.</title>
        <authorList>
            <person name="Huttlin E.L."/>
            <person name="Jedrychowski M.P."/>
            <person name="Elias J.E."/>
            <person name="Goswami T."/>
            <person name="Rad R."/>
            <person name="Beausoleil S.A."/>
            <person name="Villen J."/>
            <person name="Haas W."/>
            <person name="Sowa M.E."/>
            <person name="Gygi S.P."/>
        </authorList>
    </citation>
    <scope>PHOSPHORYLATION [LARGE SCALE ANALYSIS] AT SER-685; SER-687; SER-977; SER-1187; SER-1369; THR-1452 AND SER-1903</scope>
    <scope>IDENTIFICATION BY MASS SPECTROMETRY [LARGE SCALE ANALYSIS]</scope>
    <source>
        <tissue>Brain</tissue>
        <tissue>Brown adipose tissue</tissue>
        <tissue>Heart</tissue>
        <tissue>Kidney</tissue>
        <tissue>Lung</tissue>
        <tissue>Spleen</tissue>
        <tissue>Testis</tissue>
    </source>
</reference>
<dbReference type="EC" id="1.14.13.225" evidence="2"/>
<dbReference type="EMBL" id="AF536756">
    <property type="protein sequence ID" value="AAN06715.1"/>
    <property type="molecule type" value="mRNA"/>
</dbReference>
<dbReference type="EMBL" id="AK173033">
    <property type="protein sequence ID" value="BAD32311.1"/>
    <property type="molecule type" value="mRNA"/>
</dbReference>
<dbReference type="EMBL" id="AK122497">
    <property type="protein sequence ID" value="BAC65779.1"/>
    <property type="status" value="ALT_INIT"/>
    <property type="molecule type" value="mRNA"/>
</dbReference>
<dbReference type="EMBL" id="AC079443">
    <property type="status" value="NOT_ANNOTATED_CDS"/>
    <property type="molecule type" value="Genomic_DNA"/>
</dbReference>
<dbReference type="EMBL" id="AC083894">
    <property type="status" value="NOT_ANNOTATED_CDS"/>
    <property type="molecule type" value="Genomic_DNA"/>
</dbReference>
<dbReference type="EMBL" id="BC138257">
    <property type="protein sequence ID" value="AAI38258.1"/>
    <property type="molecule type" value="mRNA"/>
</dbReference>
<dbReference type="EMBL" id="AK132669">
    <property type="protein sequence ID" value="BAE21292.1"/>
    <property type="molecule type" value="mRNA"/>
</dbReference>
<dbReference type="EMBL" id="AK147803">
    <property type="protein sequence ID" value="BAE28149.1"/>
    <property type="molecule type" value="mRNA"/>
</dbReference>
<dbReference type="EMBL" id="AK048201">
    <property type="protein sequence ID" value="BAC33271.1"/>
    <property type="molecule type" value="mRNA"/>
</dbReference>
<dbReference type="CCDS" id="CCDS20487.1">
    <molecule id="Q8CJ19-3"/>
</dbReference>
<dbReference type="CCDS" id="CCDS85152.1">
    <molecule id="Q8CJ19-1"/>
</dbReference>
<dbReference type="RefSeq" id="NP_001257404.1">
    <molecule id="Q8CJ19-1"/>
    <property type="nucleotide sequence ID" value="NM_001270475.1"/>
</dbReference>
<dbReference type="RefSeq" id="NP_700445.2">
    <molecule id="Q8CJ19-3"/>
    <property type="nucleotide sequence ID" value="NM_153396.3"/>
</dbReference>
<dbReference type="RefSeq" id="XP_006505863.1">
    <molecule id="Q8CJ19-1"/>
    <property type="nucleotide sequence ID" value="XM_006505800.2"/>
</dbReference>
<dbReference type="RefSeq" id="XP_030111125.1">
    <molecule id="Q8CJ19-1"/>
    <property type="nucleotide sequence ID" value="XM_030255265.2"/>
</dbReference>
<dbReference type="RefSeq" id="XP_030111130.1">
    <molecule id="Q8CJ19-3"/>
    <property type="nucleotide sequence ID" value="XM_030255270.2"/>
</dbReference>
<dbReference type="RefSeq" id="XP_036021857.1">
    <molecule id="Q8CJ19-3"/>
    <property type="nucleotide sequence ID" value="XM_036165964.1"/>
</dbReference>
<dbReference type="SMR" id="Q8CJ19"/>
<dbReference type="BioGRID" id="228787">
    <property type="interactions" value="18"/>
</dbReference>
<dbReference type="FunCoup" id="Q8CJ19">
    <property type="interactions" value="2156"/>
</dbReference>
<dbReference type="IntAct" id="Q8CJ19">
    <property type="interactions" value="5"/>
</dbReference>
<dbReference type="STRING" id="10090.ENSMUSP00000146544"/>
<dbReference type="GlyGen" id="Q8CJ19">
    <property type="glycosylation" value="5 sites, 1 O-linked glycan (1 site)"/>
</dbReference>
<dbReference type="iPTMnet" id="Q8CJ19"/>
<dbReference type="PhosphoSitePlus" id="Q8CJ19"/>
<dbReference type="SwissPalm" id="Q8CJ19"/>
<dbReference type="jPOST" id="Q8CJ19"/>
<dbReference type="PaxDb" id="10090-ENSMUSP00000096056"/>
<dbReference type="PeptideAtlas" id="Q8CJ19"/>
<dbReference type="ProteomicsDB" id="292319">
    <molecule id="Q8CJ19-1"/>
</dbReference>
<dbReference type="ProteomicsDB" id="292320">
    <molecule id="Q8CJ19-2"/>
</dbReference>
<dbReference type="ProteomicsDB" id="292321">
    <molecule id="Q8CJ19-3"/>
</dbReference>
<dbReference type="ProteomicsDB" id="292322">
    <molecule id="Q8CJ19-4"/>
</dbReference>
<dbReference type="Pumba" id="Q8CJ19"/>
<dbReference type="Antibodypedia" id="34804">
    <property type="antibodies" value="23 antibodies from 9 providers"/>
</dbReference>
<dbReference type="DNASU" id="194401"/>
<dbReference type="Ensembl" id="ENSMUST00000077159.8">
    <molecule id="Q8CJ19-3"/>
    <property type="protein sequence ID" value="ENSMUSP00000076402.6"/>
    <property type="gene ID" value="ENSMUSG00000051586.18"/>
</dbReference>
<dbReference type="Ensembl" id="ENSMUST00000207889.2">
    <molecule id="Q8CJ19-1"/>
    <property type="protein sequence ID" value="ENSMUSP00000146544.2"/>
    <property type="gene ID" value="ENSMUSG00000051586.18"/>
</dbReference>
<dbReference type="GeneID" id="194401"/>
<dbReference type="KEGG" id="mmu:194401"/>
<dbReference type="UCSC" id="uc009dnw.2">
    <molecule id="Q8CJ19-1"/>
    <property type="organism name" value="mouse"/>
</dbReference>
<dbReference type="UCSC" id="uc009dnx.1">
    <molecule id="Q8CJ19-4"/>
    <property type="organism name" value="mouse"/>
</dbReference>
<dbReference type="UCSC" id="uc009dnz.3">
    <molecule id="Q8CJ19-3"/>
    <property type="organism name" value="mouse"/>
</dbReference>
<dbReference type="UCSC" id="uc009doa.1">
    <molecule id="Q8CJ19-2"/>
    <property type="organism name" value="mouse"/>
</dbReference>
<dbReference type="AGR" id="MGI:2442733"/>
<dbReference type="CTD" id="57553"/>
<dbReference type="MGI" id="MGI:2442733">
    <property type="gene designation" value="Mical3"/>
</dbReference>
<dbReference type="VEuPathDB" id="HostDB:ENSMUSG00000051586"/>
<dbReference type="eggNOG" id="KOG1700">
    <property type="taxonomic scope" value="Eukaryota"/>
</dbReference>
<dbReference type="GeneTree" id="ENSGT00940000155580"/>
<dbReference type="HOGENOM" id="CLU_000329_0_1_1"/>
<dbReference type="InParanoid" id="Q8CJ19"/>
<dbReference type="OMA" id="QWCESSP"/>
<dbReference type="PhylomeDB" id="Q8CJ19"/>
<dbReference type="TreeFam" id="TF324129"/>
<dbReference type="BioGRID-ORCS" id="194401">
    <property type="hits" value="1 hit in 76 CRISPR screens"/>
</dbReference>
<dbReference type="ChiTaRS" id="Mical3">
    <property type="organism name" value="mouse"/>
</dbReference>
<dbReference type="PRO" id="PR:Q8CJ19"/>
<dbReference type="Proteomes" id="UP000000589">
    <property type="component" value="Chromosome 6"/>
</dbReference>
<dbReference type="RNAct" id="Q8CJ19">
    <property type="molecule type" value="protein"/>
</dbReference>
<dbReference type="Bgee" id="ENSMUSG00000051586">
    <property type="expression patterns" value="Expressed in embryonic brain and 223 other cell types or tissues"/>
</dbReference>
<dbReference type="ExpressionAtlas" id="Q8CJ19">
    <property type="expression patterns" value="baseline and differential"/>
</dbReference>
<dbReference type="GO" id="GO:0005938">
    <property type="term" value="C:cell cortex"/>
    <property type="evidence" value="ECO:0007669"/>
    <property type="project" value="UniProtKB-SubCell"/>
</dbReference>
<dbReference type="GO" id="GO:0042995">
    <property type="term" value="C:cell projection"/>
    <property type="evidence" value="ECO:0007669"/>
    <property type="project" value="UniProtKB-KW"/>
</dbReference>
<dbReference type="GO" id="GO:0030496">
    <property type="term" value="C:midbody"/>
    <property type="evidence" value="ECO:0007669"/>
    <property type="project" value="UniProtKB-SubCell"/>
</dbReference>
<dbReference type="GO" id="GO:0005634">
    <property type="term" value="C:nucleus"/>
    <property type="evidence" value="ECO:0000250"/>
    <property type="project" value="UniProtKB"/>
</dbReference>
<dbReference type="GO" id="GO:0005819">
    <property type="term" value="C:spindle"/>
    <property type="evidence" value="ECO:0007669"/>
    <property type="project" value="UniProtKB-SubCell"/>
</dbReference>
<dbReference type="GO" id="GO:0003779">
    <property type="term" value="F:actin binding"/>
    <property type="evidence" value="ECO:0000250"/>
    <property type="project" value="UniProtKB"/>
</dbReference>
<dbReference type="GO" id="GO:0120501">
    <property type="term" value="F:F-actin monooxygenase activity"/>
    <property type="evidence" value="ECO:0007669"/>
    <property type="project" value="UniProtKB-EC"/>
</dbReference>
<dbReference type="GO" id="GO:0071949">
    <property type="term" value="F:FAD binding"/>
    <property type="evidence" value="ECO:0000250"/>
    <property type="project" value="UniProtKB"/>
</dbReference>
<dbReference type="GO" id="GO:0046872">
    <property type="term" value="F:metal ion binding"/>
    <property type="evidence" value="ECO:0007669"/>
    <property type="project" value="UniProtKB-KW"/>
</dbReference>
<dbReference type="GO" id="GO:0016709">
    <property type="term" value="F:oxidoreductase activity, acting on paired donors, with incorporation or reduction of molecular oxygen, NAD(P)H as one donor, and incorporation of one atom of oxygen"/>
    <property type="evidence" value="ECO:0000250"/>
    <property type="project" value="UniProtKB"/>
</dbReference>
<dbReference type="GO" id="GO:0030042">
    <property type="term" value="P:actin filament depolymerization"/>
    <property type="evidence" value="ECO:0000250"/>
    <property type="project" value="UniProtKB"/>
</dbReference>
<dbReference type="GO" id="GO:0051301">
    <property type="term" value="P:cell division"/>
    <property type="evidence" value="ECO:0007669"/>
    <property type="project" value="UniProtKB-KW"/>
</dbReference>
<dbReference type="GO" id="GO:0007010">
    <property type="term" value="P:cytoskeleton organization"/>
    <property type="evidence" value="ECO:0000250"/>
    <property type="project" value="UniProtKB"/>
</dbReference>
<dbReference type="GO" id="GO:0006887">
    <property type="term" value="P:exocytosis"/>
    <property type="evidence" value="ECO:0007669"/>
    <property type="project" value="UniProtKB-KW"/>
</dbReference>
<dbReference type="CDD" id="cd21251">
    <property type="entry name" value="CH_MICAL3"/>
    <property type="match status" value="1"/>
</dbReference>
<dbReference type="CDD" id="cd09439">
    <property type="entry name" value="LIM_Mical"/>
    <property type="match status" value="1"/>
</dbReference>
<dbReference type="FunFam" id="3.50.50.60:FF:000004">
    <property type="entry name" value="protein-methionine sulfoxide oxidase MICAL2 isoform X1"/>
    <property type="match status" value="1"/>
</dbReference>
<dbReference type="FunFam" id="1.10.418.10:FF:000026">
    <property type="entry name" value="protein-methionine sulfoxide oxidase MICAL3 isoform X1"/>
    <property type="match status" value="1"/>
</dbReference>
<dbReference type="FunFam" id="2.10.110.10:FF:000043">
    <property type="entry name" value="protein-methionine sulfoxide oxidase MICAL3 isoform X2"/>
    <property type="match status" value="1"/>
</dbReference>
<dbReference type="Gene3D" id="1.10.418.10">
    <property type="entry name" value="Calponin-like domain"/>
    <property type="match status" value="1"/>
</dbReference>
<dbReference type="Gene3D" id="2.10.110.10">
    <property type="entry name" value="Cysteine Rich Protein"/>
    <property type="match status" value="1"/>
</dbReference>
<dbReference type="Gene3D" id="3.50.50.60">
    <property type="entry name" value="FAD/NAD(P)-binding domain"/>
    <property type="match status" value="1"/>
</dbReference>
<dbReference type="InterPro" id="IPR022735">
    <property type="entry name" value="bMERB_dom"/>
</dbReference>
<dbReference type="InterPro" id="IPR001715">
    <property type="entry name" value="CH_dom"/>
</dbReference>
<dbReference type="InterPro" id="IPR036872">
    <property type="entry name" value="CH_dom_sf"/>
</dbReference>
<dbReference type="InterPro" id="IPR050540">
    <property type="entry name" value="F-actin_Monoox_Mical"/>
</dbReference>
<dbReference type="InterPro" id="IPR002938">
    <property type="entry name" value="FAD-bd"/>
</dbReference>
<dbReference type="InterPro" id="IPR036188">
    <property type="entry name" value="FAD/NAD-bd_sf"/>
</dbReference>
<dbReference type="InterPro" id="IPR001781">
    <property type="entry name" value="Znf_LIM"/>
</dbReference>
<dbReference type="PANTHER" id="PTHR23167:SF51">
    <property type="entry name" value="[F-ACTIN]-MONOOXYGENASE MICAL3"/>
    <property type="match status" value="1"/>
</dbReference>
<dbReference type="PANTHER" id="PTHR23167">
    <property type="entry name" value="CALPONIN HOMOLOGY DOMAIN-CONTAINING PROTEIN DDB_G0272472-RELATED"/>
    <property type="match status" value="1"/>
</dbReference>
<dbReference type="Pfam" id="PF12130">
    <property type="entry name" value="bMERB_dom"/>
    <property type="match status" value="1"/>
</dbReference>
<dbReference type="Pfam" id="PF00307">
    <property type="entry name" value="CH"/>
    <property type="match status" value="1"/>
</dbReference>
<dbReference type="Pfam" id="PF01494">
    <property type="entry name" value="FAD_binding_3"/>
    <property type="match status" value="1"/>
</dbReference>
<dbReference type="Pfam" id="PF00412">
    <property type="entry name" value="LIM"/>
    <property type="match status" value="1"/>
</dbReference>
<dbReference type="Pfam" id="PF25413">
    <property type="entry name" value="Rossman_Mical"/>
    <property type="match status" value="1"/>
</dbReference>
<dbReference type="PRINTS" id="PR00420">
    <property type="entry name" value="RNGMNOXGNASE"/>
</dbReference>
<dbReference type="SMART" id="SM00033">
    <property type="entry name" value="CH"/>
    <property type="match status" value="1"/>
</dbReference>
<dbReference type="SMART" id="SM01203">
    <property type="entry name" value="DUF3585"/>
    <property type="match status" value="1"/>
</dbReference>
<dbReference type="SMART" id="SM00132">
    <property type="entry name" value="LIM"/>
    <property type="match status" value="1"/>
</dbReference>
<dbReference type="SUPFAM" id="SSF47576">
    <property type="entry name" value="Calponin-homology domain, CH-domain"/>
    <property type="match status" value="1"/>
</dbReference>
<dbReference type="SUPFAM" id="SSF51905">
    <property type="entry name" value="FAD/NAD(P)-binding domain"/>
    <property type="match status" value="1"/>
</dbReference>
<dbReference type="SUPFAM" id="SSF57716">
    <property type="entry name" value="Glucocorticoid receptor-like (DNA-binding domain)"/>
    <property type="match status" value="1"/>
</dbReference>
<dbReference type="PROSITE" id="PS51848">
    <property type="entry name" value="BMERB"/>
    <property type="match status" value="1"/>
</dbReference>
<dbReference type="PROSITE" id="PS50021">
    <property type="entry name" value="CH"/>
    <property type="match status" value="1"/>
</dbReference>
<dbReference type="PROSITE" id="PS00478">
    <property type="entry name" value="LIM_DOMAIN_1"/>
    <property type="match status" value="1"/>
</dbReference>
<dbReference type="PROSITE" id="PS50023">
    <property type="entry name" value="LIM_DOMAIN_2"/>
    <property type="match status" value="1"/>
</dbReference>
<proteinExistence type="evidence at protein level"/>
<feature type="chain" id="PRO_0000075847" description="[F-actin]-monooxygenase MICAL3">
    <location>
        <begin position="1"/>
        <end position="1993"/>
    </location>
</feature>
<feature type="domain" description="Calponin-homology (CH)" evidence="6">
    <location>
        <begin position="518"/>
        <end position="624"/>
    </location>
</feature>
<feature type="domain" description="LIM zinc-binding" evidence="7">
    <location>
        <begin position="762"/>
        <end position="824"/>
    </location>
</feature>
<feature type="domain" description="bMERB" evidence="8">
    <location>
        <begin position="1832"/>
        <end position="1981"/>
    </location>
</feature>
<feature type="region of interest" description="Monooxygenase domain" evidence="4">
    <location>
        <begin position="2"/>
        <end position="494"/>
    </location>
</feature>
<feature type="region of interest" description="Disordered" evidence="9">
    <location>
        <begin position="658"/>
        <end position="704"/>
    </location>
</feature>
<feature type="region of interest" description="Disordered" evidence="9">
    <location>
        <begin position="854"/>
        <end position="886"/>
    </location>
</feature>
<feature type="region of interest" description="Disordered" evidence="9">
    <location>
        <begin position="905"/>
        <end position="1023"/>
    </location>
</feature>
<feature type="region of interest" description="Disordered" evidence="9">
    <location>
        <begin position="1039"/>
        <end position="1309"/>
    </location>
</feature>
<feature type="region of interest" description="Disordered" evidence="9">
    <location>
        <begin position="1332"/>
        <end position="1546"/>
    </location>
</feature>
<feature type="region of interest" description="Disordered" evidence="9">
    <location>
        <begin position="1559"/>
        <end position="1837"/>
    </location>
</feature>
<feature type="coiled-coil region" evidence="5">
    <location>
        <begin position="1817"/>
        <end position="1983"/>
    </location>
</feature>
<feature type="compositionally biased region" description="Basic and acidic residues" evidence="9">
    <location>
        <begin position="669"/>
        <end position="679"/>
    </location>
</feature>
<feature type="compositionally biased region" description="Polar residues" evidence="9">
    <location>
        <begin position="860"/>
        <end position="873"/>
    </location>
</feature>
<feature type="compositionally biased region" description="Acidic residues" evidence="9">
    <location>
        <begin position="938"/>
        <end position="951"/>
    </location>
</feature>
<feature type="compositionally biased region" description="Basic and acidic residues" evidence="9">
    <location>
        <begin position="975"/>
        <end position="988"/>
    </location>
</feature>
<feature type="compositionally biased region" description="Acidic residues" evidence="9">
    <location>
        <begin position="989"/>
        <end position="1014"/>
    </location>
</feature>
<feature type="compositionally biased region" description="Basic and acidic residues" evidence="9">
    <location>
        <begin position="1039"/>
        <end position="1051"/>
    </location>
</feature>
<feature type="compositionally biased region" description="Acidic residues" evidence="9">
    <location>
        <begin position="1065"/>
        <end position="1090"/>
    </location>
</feature>
<feature type="compositionally biased region" description="Basic and acidic residues" evidence="9">
    <location>
        <begin position="1111"/>
        <end position="1148"/>
    </location>
</feature>
<feature type="compositionally biased region" description="Basic and acidic residues" evidence="9">
    <location>
        <begin position="1199"/>
        <end position="1212"/>
    </location>
</feature>
<feature type="compositionally biased region" description="Polar residues" evidence="9">
    <location>
        <begin position="1230"/>
        <end position="1239"/>
    </location>
</feature>
<feature type="compositionally biased region" description="Pro residues" evidence="9">
    <location>
        <begin position="1245"/>
        <end position="1255"/>
    </location>
</feature>
<feature type="compositionally biased region" description="Polar residues" evidence="9">
    <location>
        <begin position="1257"/>
        <end position="1275"/>
    </location>
</feature>
<feature type="compositionally biased region" description="Basic and acidic residues" evidence="9">
    <location>
        <begin position="1405"/>
        <end position="1420"/>
    </location>
</feature>
<feature type="compositionally biased region" description="Low complexity" evidence="9">
    <location>
        <begin position="1421"/>
        <end position="1433"/>
    </location>
</feature>
<feature type="compositionally biased region" description="Polar residues" evidence="9">
    <location>
        <begin position="1434"/>
        <end position="1452"/>
    </location>
</feature>
<feature type="compositionally biased region" description="Pro residues" evidence="9">
    <location>
        <begin position="1454"/>
        <end position="1465"/>
    </location>
</feature>
<feature type="compositionally biased region" description="Acidic residues" evidence="9">
    <location>
        <begin position="1516"/>
        <end position="1530"/>
    </location>
</feature>
<feature type="compositionally biased region" description="Basic and acidic residues" evidence="9">
    <location>
        <begin position="1584"/>
        <end position="1600"/>
    </location>
</feature>
<feature type="compositionally biased region" description="Polar residues" evidence="9">
    <location>
        <begin position="1623"/>
        <end position="1633"/>
    </location>
</feature>
<feature type="compositionally biased region" description="Low complexity" evidence="9">
    <location>
        <begin position="1665"/>
        <end position="1685"/>
    </location>
</feature>
<feature type="compositionally biased region" description="Basic residues" evidence="9">
    <location>
        <begin position="1686"/>
        <end position="1704"/>
    </location>
</feature>
<feature type="compositionally biased region" description="Polar residues" evidence="9">
    <location>
        <begin position="1754"/>
        <end position="1763"/>
    </location>
</feature>
<feature type="compositionally biased region" description="Basic and acidic residues" evidence="9">
    <location>
        <begin position="1795"/>
        <end position="1811"/>
    </location>
</feature>
<feature type="compositionally biased region" description="Basic residues" evidence="9">
    <location>
        <begin position="1819"/>
        <end position="1830"/>
    </location>
</feature>
<feature type="binding site" evidence="4">
    <location>
        <position position="97"/>
    </location>
    <ligand>
        <name>FAD</name>
        <dbReference type="ChEBI" id="CHEBI:57692"/>
    </ligand>
</feature>
<feature type="binding site" evidence="4">
    <location>
        <begin position="116"/>
        <end position="118"/>
    </location>
    <ligand>
        <name>FAD</name>
        <dbReference type="ChEBI" id="CHEBI:57692"/>
    </ligand>
</feature>
<feature type="binding site" evidence="4">
    <location>
        <begin position="123"/>
        <end position="125"/>
    </location>
    <ligand>
        <name>FAD</name>
        <dbReference type="ChEBI" id="CHEBI:57692"/>
    </ligand>
</feature>
<feature type="binding site" evidence="4">
    <location>
        <position position="183"/>
    </location>
    <ligand>
        <name>FAD</name>
        <dbReference type="ChEBI" id="CHEBI:57692"/>
    </ligand>
</feature>
<feature type="binding site" evidence="4">
    <location>
        <position position="298"/>
    </location>
    <ligand>
        <name>FAD</name>
        <dbReference type="ChEBI" id="CHEBI:57692"/>
    </ligand>
</feature>
<feature type="binding site" evidence="4">
    <location>
        <position position="398"/>
    </location>
    <ligand>
        <name>FAD</name>
        <dbReference type="ChEBI" id="CHEBI:57692"/>
    </ligand>
</feature>
<feature type="binding site" evidence="3">
    <location>
        <position position="764"/>
    </location>
    <ligand>
        <name>Zn(2+)</name>
        <dbReference type="ChEBI" id="CHEBI:29105"/>
        <label>1</label>
    </ligand>
</feature>
<feature type="binding site" evidence="3">
    <location>
        <position position="767"/>
    </location>
    <ligand>
        <name>Zn(2+)</name>
        <dbReference type="ChEBI" id="CHEBI:29105"/>
        <label>1</label>
    </ligand>
</feature>
<feature type="binding site" evidence="3">
    <location>
        <position position="785"/>
    </location>
    <ligand>
        <name>Zn(2+)</name>
        <dbReference type="ChEBI" id="CHEBI:29105"/>
        <label>1</label>
    </ligand>
</feature>
<feature type="binding site" evidence="3">
    <location>
        <position position="788"/>
    </location>
    <ligand>
        <name>Zn(2+)</name>
        <dbReference type="ChEBI" id="CHEBI:29105"/>
        <label>1</label>
    </ligand>
</feature>
<feature type="binding site" evidence="3">
    <location>
        <position position="791"/>
    </location>
    <ligand>
        <name>Zn(2+)</name>
        <dbReference type="ChEBI" id="CHEBI:29105"/>
        <label>2</label>
    </ligand>
</feature>
<feature type="binding site" evidence="3">
    <location>
        <position position="794"/>
    </location>
    <ligand>
        <name>Zn(2+)</name>
        <dbReference type="ChEBI" id="CHEBI:29105"/>
        <label>2</label>
    </ligand>
</feature>
<feature type="binding site" evidence="3">
    <location>
        <position position="814"/>
    </location>
    <ligand>
        <name>Zn(2+)</name>
        <dbReference type="ChEBI" id="CHEBI:29105"/>
        <label>2</label>
    </ligand>
</feature>
<feature type="binding site" evidence="3">
    <location>
        <position position="817"/>
    </location>
    <ligand>
        <name>Zn(2+)</name>
        <dbReference type="ChEBI" id="CHEBI:29105"/>
        <label>2</label>
    </ligand>
</feature>
<feature type="modified residue" description="Phosphoserine" evidence="2">
    <location>
        <position position="649"/>
    </location>
</feature>
<feature type="modified residue" description="Phosphoserine" evidence="15">
    <location>
        <position position="685"/>
    </location>
</feature>
<feature type="modified residue" description="Phosphoserine" evidence="15">
    <location>
        <position position="687"/>
    </location>
</feature>
<feature type="modified residue" description="Phosphothreonine" evidence="2">
    <location>
        <position position="887"/>
    </location>
</feature>
<feature type="modified residue" description="Phosphoserine" evidence="15">
    <location>
        <position position="977"/>
    </location>
</feature>
<feature type="modified residue" description="Phosphoserine" evidence="2">
    <location>
        <position position="1131"/>
    </location>
</feature>
<feature type="modified residue" description="Phosphoserine" evidence="15">
    <location>
        <position position="1187"/>
    </location>
</feature>
<feature type="modified residue" description="Phosphoserine" evidence="2">
    <location>
        <position position="1272"/>
    </location>
</feature>
<feature type="modified residue" description="Phosphothreonine" evidence="2">
    <location>
        <position position="1274"/>
    </location>
</feature>
<feature type="modified residue" description="Phosphoserine" evidence="2">
    <location>
        <position position="1276"/>
    </location>
</feature>
<feature type="modified residue" description="Phosphoserine" evidence="2">
    <location>
        <position position="1335"/>
    </location>
</feature>
<feature type="modified residue" description="Phosphothreonine" evidence="2">
    <location>
        <position position="1339"/>
    </location>
</feature>
<feature type="modified residue" description="Phosphoserine" evidence="15">
    <location>
        <position position="1369"/>
    </location>
</feature>
<feature type="modified residue" description="Phosphoserine" evidence="2">
    <location>
        <position position="1382"/>
    </location>
</feature>
<feature type="modified residue" description="Phosphoserine" evidence="2">
    <location>
        <position position="1431"/>
    </location>
</feature>
<feature type="modified residue" description="Phosphothreonine" evidence="15">
    <location>
        <position position="1452"/>
    </location>
</feature>
<feature type="modified residue" description="Phosphoserine" evidence="2">
    <location>
        <position position="1640"/>
    </location>
</feature>
<feature type="modified residue" description="Phosphoserine" evidence="2">
    <location>
        <position position="1692"/>
    </location>
</feature>
<feature type="modified residue" description="Phosphoserine" evidence="2">
    <location>
        <position position="1695"/>
    </location>
</feature>
<feature type="modified residue" description="Phosphoserine" evidence="15">
    <location>
        <position position="1903"/>
    </location>
</feature>
<feature type="splice variant" id="VSP_039490" description="In isoform 4." evidence="12">
    <location>
        <begin position="1"/>
        <end position="871"/>
    </location>
</feature>
<feature type="splice variant" id="VSP_039491" description="In isoform 2." evidence="10">
    <original>GSIKKEFPQNLGGSDTCYFCQKRVYVM</original>
    <variation>VSPKLSSRMTTWYRKEGLHAAISQALV</variation>
    <location>
        <begin position="748"/>
        <end position="774"/>
    </location>
</feature>
<feature type="splice variant" id="VSP_039492" description="In isoform 2." evidence="10">
    <location>
        <begin position="775"/>
        <end position="1993"/>
    </location>
</feature>
<feature type="splice variant" id="VSP_039493" description="In isoform 3." evidence="11 13">
    <original>GKFYCKPHYCYRLSGYAQRKRPAVAPLSGKEVKGALQDGPTADANGLASVAASSA</original>
    <variation>EFSPNFWTSASYHVPVALPATVMPMCLLYHPSQVLVCLEGGPAFMSPVLFNDTNS</variation>
    <location>
        <begin position="810"/>
        <end position="864"/>
    </location>
</feature>
<feature type="splice variant" id="VSP_039494" description="In isoform 3." evidence="11 13">
    <location>
        <begin position="865"/>
        <end position="1993"/>
    </location>
</feature>
<feature type="splice variant" id="VSP_039495" description="In isoform 4." evidence="12">
    <location>
        <begin position="1016"/>
        <end position="1061"/>
    </location>
</feature>
<feature type="sequence conflict" description="In Ref. 1; AAN06715." evidence="14" ref="1">
    <original>A</original>
    <variation>T</variation>
    <location>
        <position position="281"/>
    </location>
</feature>
<feature type="sequence conflict" description="In Ref. 5; BAE28149." evidence="14" ref="5">
    <original>P</original>
    <variation>H</variation>
    <location>
        <position position="1249"/>
    </location>
</feature>
<keyword id="KW-0009">Actin-binding</keyword>
<keyword id="KW-0025">Alternative splicing</keyword>
<keyword id="KW-0131">Cell cycle</keyword>
<keyword id="KW-0132">Cell division</keyword>
<keyword id="KW-0966">Cell projection</keyword>
<keyword id="KW-0175">Coiled coil</keyword>
<keyword id="KW-0963">Cytoplasm</keyword>
<keyword id="KW-0206">Cytoskeleton</keyword>
<keyword id="KW-0268">Exocytosis</keyword>
<keyword id="KW-0274">FAD</keyword>
<keyword id="KW-0285">Flavoprotein</keyword>
<keyword id="KW-0440">LIM domain</keyword>
<keyword id="KW-0479">Metal-binding</keyword>
<keyword id="KW-0503">Monooxygenase</keyword>
<keyword id="KW-0521">NADP</keyword>
<keyword id="KW-0539">Nucleus</keyword>
<keyword id="KW-0560">Oxidoreductase</keyword>
<keyword id="KW-0597">Phosphoprotein</keyword>
<keyword id="KW-1185">Reference proteome</keyword>
<keyword id="KW-0862">Zinc</keyword>